<keyword id="KW-0090">Biological rhythms</keyword>
<keyword id="KW-0131">Cell cycle</keyword>
<keyword id="KW-0156">Chromatin regulator</keyword>
<keyword id="KW-0223">Dioxygenase</keyword>
<keyword id="KW-0408">Iron</keyword>
<keyword id="KW-0479">Metal-binding</keyword>
<keyword id="KW-0539">Nucleus</keyword>
<keyword id="KW-0560">Oxidoreductase</keyword>
<keyword id="KW-1185">Reference proteome</keyword>
<keyword id="KW-0804">Transcription</keyword>
<keyword id="KW-0805">Transcription regulation</keyword>
<name>KDM8_XENTR</name>
<organism>
    <name type="scientific">Xenopus tropicalis</name>
    <name type="common">Western clawed frog</name>
    <name type="synonym">Silurana tropicalis</name>
    <dbReference type="NCBI Taxonomy" id="8364"/>
    <lineage>
        <taxon>Eukaryota</taxon>
        <taxon>Metazoa</taxon>
        <taxon>Chordata</taxon>
        <taxon>Craniata</taxon>
        <taxon>Vertebrata</taxon>
        <taxon>Euteleostomi</taxon>
        <taxon>Amphibia</taxon>
        <taxon>Batrachia</taxon>
        <taxon>Anura</taxon>
        <taxon>Pipoidea</taxon>
        <taxon>Pipidae</taxon>
        <taxon>Xenopodinae</taxon>
        <taxon>Xenopus</taxon>
        <taxon>Silurana</taxon>
    </lineage>
</organism>
<reference key="1">
    <citation type="submission" date="2008-04" db="EMBL/GenBank/DDBJ databases">
        <authorList>
            <consortium name="NIH - Xenopus Gene Collection (XGC) project"/>
        </authorList>
    </citation>
    <scope>NUCLEOTIDE SEQUENCE [LARGE SCALE MRNA]</scope>
    <source>
        <tissue>Small intestine</tissue>
    </source>
</reference>
<gene>
    <name type="primary">kdm8</name>
    <name type="synonym">jmjd5</name>
</gene>
<sequence length="443" mass="50251">MHRSVPEQVSAELPATLEQFQITLGADVEDRVEECVREAARCLYRGAIVQCGALGELLIDYSWEKLNARNWREVGREWRAVYSYGCLFRAVGLCSVTGSIEEALQVCDIGLLMGAEIMDNLLGRIISVLQRIAPSREETKLEAERGVREPGLESSKLHSPGEHSNKKSFASVTGRKRIREGPEADFDPKGCSISEKVPCLLVPVLDSETAIPKLHCPSLEHFRDHYLVPQKPVVLEGVIDHWPCLKKWSVEYIQRVAGCRTVPVELGSRYTDAEWSQRLMTVNEFITKYILDKQNGIGYLAQHQLFEQIPELKEDICIPDYCCLGEASEDEITINAWFGPAGTVSPLHQDPQQNFLAQIVGRKYIRVYSVAETEKLYPFDSSILHNTSQVDVESPDQNKFPRFSQASYQECILSPGQVLFIPVKWWHYIRALDLSFSVSFWWS</sequence>
<protein>
    <recommendedName>
        <fullName>Lysine-specific demethylase 8</fullName>
        <ecNumber>1.14.11.27</ecNumber>
    </recommendedName>
    <alternativeName>
        <fullName>JmjC domain-containing protein 5</fullName>
    </alternativeName>
    <alternativeName>
        <fullName>Jumonji domain-containing protein 5</fullName>
    </alternativeName>
</protein>
<dbReference type="EC" id="1.14.11.27"/>
<dbReference type="EMBL" id="BC166391">
    <property type="protein sequence ID" value="AAI66391.1"/>
    <property type="molecule type" value="mRNA"/>
</dbReference>
<dbReference type="RefSeq" id="NP_001121525.1">
    <property type="nucleotide sequence ID" value="NM_001128053.1"/>
</dbReference>
<dbReference type="SMR" id="B2GUS6"/>
<dbReference type="FunCoup" id="B2GUS6">
    <property type="interactions" value="2064"/>
</dbReference>
<dbReference type="STRING" id="8364.ENSXETP00000025844"/>
<dbReference type="PaxDb" id="8364-ENSXETP00000047024"/>
<dbReference type="GeneID" id="100158649"/>
<dbReference type="KEGG" id="xtr:100158649"/>
<dbReference type="AGR" id="Xenbase:XB-GENE-5811534"/>
<dbReference type="CTD" id="79831"/>
<dbReference type="Xenbase" id="XB-GENE-5811534">
    <property type="gene designation" value="kdm8"/>
</dbReference>
<dbReference type="eggNOG" id="KOG2132">
    <property type="taxonomic scope" value="Eukaryota"/>
</dbReference>
<dbReference type="InParanoid" id="B2GUS6"/>
<dbReference type="OMA" id="THWPART"/>
<dbReference type="OrthoDB" id="47172at2759"/>
<dbReference type="Reactome" id="R-XTR-9629569">
    <property type="pathway name" value="Protein hydroxylation"/>
</dbReference>
<dbReference type="Proteomes" id="UP000008143">
    <property type="component" value="Chromosome 9"/>
</dbReference>
<dbReference type="Bgee" id="ENSXETG00000021748">
    <property type="expression patterns" value="Expressed in ovary and 12 other cell types or tissues"/>
</dbReference>
<dbReference type="GO" id="GO:0005634">
    <property type="term" value="C:nucleus"/>
    <property type="evidence" value="ECO:0000250"/>
    <property type="project" value="UniProtKB"/>
</dbReference>
<dbReference type="GO" id="GO:0003682">
    <property type="term" value="F:chromatin binding"/>
    <property type="evidence" value="ECO:0000250"/>
    <property type="project" value="UniProtKB"/>
</dbReference>
<dbReference type="GO" id="GO:0051864">
    <property type="term" value="F:histone H3K36 demethylase activity"/>
    <property type="evidence" value="ECO:0000250"/>
    <property type="project" value="UniProtKB"/>
</dbReference>
<dbReference type="GO" id="GO:0140680">
    <property type="term" value="F:histone H3K36me/H3K36me2 demethylase activity"/>
    <property type="evidence" value="ECO:0007669"/>
    <property type="project" value="UniProtKB-EC"/>
</dbReference>
<dbReference type="GO" id="GO:0046872">
    <property type="term" value="F:metal ion binding"/>
    <property type="evidence" value="ECO:0007669"/>
    <property type="project" value="UniProtKB-KW"/>
</dbReference>
<dbReference type="GO" id="GO:0032922">
    <property type="term" value="P:circadian regulation of gene expression"/>
    <property type="evidence" value="ECO:0000250"/>
    <property type="project" value="UniProtKB"/>
</dbReference>
<dbReference type="GO" id="GO:0000086">
    <property type="term" value="P:G2/M transition of mitotic cell cycle"/>
    <property type="evidence" value="ECO:0000250"/>
    <property type="project" value="UniProtKB"/>
</dbReference>
<dbReference type="GO" id="GO:0045893">
    <property type="term" value="P:positive regulation of DNA-templated transcription"/>
    <property type="evidence" value="ECO:0000250"/>
    <property type="project" value="UniProtKB"/>
</dbReference>
<dbReference type="FunFam" id="2.60.120.650:FF:000019">
    <property type="entry name" value="Bifunctional peptidase and arginyl-hydroxylase JMJD5"/>
    <property type="match status" value="1"/>
</dbReference>
<dbReference type="Gene3D" id="2.60.120.650">
    <property type="entry name" value="Cupin"/>
    <property type="match status" value="1"/>
</dbReference>
<dbReference type="InterPro" id="IPR056520">
    <property type="entry name" value="ARM_KDM8_N"/>
</dbReference>
<dbReference type="InterPro" id="IPR041667">
    <property type="entry name" value="Cupin_8"/>
</dbReference>
<dbReference type="InterPro" id="IPR003347">
    <property type="entry name" value="JmjC_dom"/>
</dbReference>
<dbReference type="PANTHER" id="PTHR12461:SF106">
    <property type="entry name" value="BIFUNCTIONAL PEPTIDASE AND ARGINYL-HYDROXYLASE JMJD5"/>
    <property type="match status" value="1"/>
</dbReference>
<dbReference type="PANTHER" id="PTHR12461">
    <property type="entry name" value="HYPOXIA-INDUCIBLE FACTOR 1 ALPHA INHIBITOR-RELATED"/>
    <property type="match status" value="1"/>
</dbReference>
<dbReference type="Pfam" id="PF24472">
    <property type="entry name" value="ARM_KDM8_N"/>
    <property type="match status" value="1"/>
</dbReference>
<dbReference type="Pfam" id="PF13621">
    <property type="entry name" value="Cupin_8"/>
    <property type="match status" value="1"/>
</dbReference>
<dbReference type="SMART" id="SM00558">
    <property type="entry name" value="JmjC"/>
    <property type="match status" value="1"/>
</dbReference>
<dbReference type="SUPFAM" id="SSF51197">
    <property type="entry name" value="Clavaminate synthase-like"/>
    <property type="match status" value="1"/>
</dbReference>
<dbReference type="PROSITE" id="PS51184">
    <property type="entry name" value="JMJC"/>
    <property type="match status" value="1"/>
</dbReference>
<comment type="function">
    <text evidence="1 2">Histone demethylase required for G2/M phase cell cycle progression (By similarity). Specifically demethylates dimethylated 'Lys-36' (H3K36me2) of histone H3, an epigenetic repressive mark, thereby acting as a transcription activator (By similarity). May play a role in the regulation of the circadian clock (By similarity).</text>
</comment>
<comment type="catalytic activity">
    <reaction>
        <text>N(6),N(6)-dimethyl-L-lysyl(36)-[histone H3] + 2 2-oxoglutarate + 2 O2 = L-lysyl(36)-[histone H3] + 2 formaldehyde + 2 succinate + 2 CO2</text>
        <dbReference type="Rhea" id="RHEA:42032"/>
        <dbReference type="Rhea" id="RHEA-COMP:9785"/>
        <dbReference type="Rhea" id="RHEA-COMP:9787"/>
        <dbReference type="ChEBI" id="CHEBI:15379"/>
        <dbReference type="ChEBI" id="CHEBI:16526"/>
        <dbReference type="ChEBI" id="CHEBI:16810"/>
        <dbReference type="ChEBI" id="CHEBI:16842"/>
        <dbReference type="ChEBI" id="CHEBI:29969"/>
        <dbReference type="ChEBI" id="CHEBI:30031"/>
        <dbReference type="ChEBI" id="CHEBI:61976"/>
        <dbReference type="EC" id="1.14.11.27"/>
    </reaction>
</comment>
<comment type="cofactor">
    <cofactor evidence="1">
        <name>Fe(2+)</name>
        <dbReference type="ChEBI" id="CHEBI:29033"/>
    </cofactor>
    <text evidence="1">Binds 1 Fe(2+) ion per subunit.</text>
</comment>
<comment type="subcellular location">
    <subcellularLocation>
        <location evidence="1">Nucleus</location>
    </subcellularLocation>
</comment>
<accession>B2GUS6</accession>
<proteinExistence type="evidence at transcript level"/>
<feature type="chain" id="PRO_0000399816" description="Lysine-specific demethylase 8">
    <location>
        <begin position="1"/>
        <end position="443"/>
    </location>
</feature>
<feature type="domain" description="JmjC" evidence="3">
    <location>
        <begin position="298"/>
        <end position="443"/>
    </location>
</feature>
<feature type="region of interest" description="Disordered" evidence="4">
    <location>
        <begin position="139"/>
        <end position="174"/>
    </location>
</feature>
<feature type="compositionally biased region" description="Basic and acidic residues" evidence="4">
    <location>
        <begin position="139"/>
        <end position="165"/>
    </location>
</feature>
<feature type="binding site" evidence="3">
    <location>
        <position position="348"/>
    </location>
    <ligand>
        <name>Fe cation</name>
        <dbReference type="ChEBI" id="CHEBI:24875"/>
        <note>catalytic</note>
    </ligand>
</feature>
<feature type="binding site" evidence="3">
    <location>
        <position position="350"/>
    </location>
    <ligand>
        <name>Fe cation</name>
        <dbReference type="ChEBI" id="CHEBI:24875"/>
        <note>catalytic</note>
    </ligand>
</feature>
<feature type="binding site" evidence="3">
    <location>
        <position position="427"/>
    </location>
    <ligand>
        <name>Fe cation</name>
        <dbReference type="ChEBI" id="CHEBI:24875"/>
        <note>catalytic</note>
    </ligand>
</feature>
<evidence type="ECO:0000250" key="1">
    <source>
        <dbReference type="UniProtKB" id="Q8N371"/>
    </source>
</evidence>
<evidence type="ECO:0000250" key="2">
    <source>
        <dbReference type="UniProtKB" id="Q9CXT6"/>
    </source>
</evidence>
<evidence type="ECO:0000255" key="3">
    <source>
        <dbReference type="PROSITE-ProRule" id="PRU00538"/>
    </source>
</evidence>
<evidence type="ECO:0000256" key="4">
    <source>
        <dbReference type="SAM" id="MobiDB-lite"/>
    </source>
</evidence>